<proteinExistence type="inferred from homology"/>
<gene>
    <name evidence="1" type="primary">kynA</name>
    <name type="ordered locus">BRADO1529</name>
</gene>
<sequence>MSNAPYDPATEGARMNFKGRMSYGDYLMLERLLDAQAPLSSAHDELLFIIQHQTSELWMKLAIHEIKAAMAAIARDDVQPAFKMLARVSRIFEQLNGAWDVLRTMTPSEYTLFRDKLGESSGFQSFQYRSIEFLLGNRNLAMLRPHAHHPELTAELESILAKPSLYDEALRLLARRGFFIGADGQRTDWRGTRAESAEVAAAWTSVYRDPQRHWELYELAEKLVDFEDYFRRWRFNHVTTVERIIGFKTGTGGTSGVNYLRKMLEIVLFPELWKLRTGL</sequence>
<name>T23O_BRASO</name>
<comment type="function">
    <text evidence="1">Heme-dependent dioxygenase that catalyzes the oxidative cleavage of the L-tryptophan (L-Trp) pyrrole ring and converts L-tryptophan to N-formyl-L-kynurenine. Catalyzes the oxidative cleavage of the indole moiety.</text>
</comment>
<comment type="catalytic activity">
    <reaction evidence="1">
        <text>L-tryptophan + O2 = N-formyl-L-kynurenine</text>
        <dbReference type="Rhea" id="RHEA:24536"/>
        <dbReference type="ChEBI" id="CHEBI:15379"/>
        <dbReference type="ChEBI" id="CHEBI:57912"/>
        <dbReference type="ChEBI" id="CHEBI:58629"/>
        <dbReference type="EC" id="1.13.11.11"/>
    </reaction>
</comment>
<comment type="cofactor">
    <cofactor evidence="1">
        <name>heme</name>
        <dbReference type="ChEBI" id="CHEBI:30413"/>
    </cofactor>
    <text evidence="1">Binds 1 heme group per subunit.</text>
</comment>
<comment type="pathway">
    <text evidence="1">Amino-acid degradation; L-tryptophan degradation via kynurenine pathway; L-kynurenine from L-tryptophan: step 1/2.</text>
</comment>
<comment type="subunit">
    <text evidence="1">Homotetramer.</text>
</comment>
<comment type="similarity">
    <text evidence="1">Belongs to the tryptophan 2,3-dioxygenase family.</text>
</comment>
<dbReference type="EC" id="1.13.11.11" evidence="1"/>
<dbReference type="EMBL" id="CU234118">
    <property type="protein sequence ID" value="CAL75412.1"/>
    <property type="molecule type" value="Genomic_DNA"/>
</dbReference>
<dbReference type="RefSeq" id="WP_011924643.1">
    <property type="nucleotide sequence ID" value="NC_009445.1"/>
</dbReference>
<dbReference type="SMR" id="A4YND6"/>
<dbReference type="STRING" id="114615.BRADO1529"/>
<dbReference type="KEGG" id="bra:BRADO1529"/>
<dbReference type="eggNOG" id="COG3483">
    <property type="taxonomic scope" value="Bacteria"/>
</dbReference>
<dbReference type="HOGENOM" id="CLU_063240_0_0_5"/>
<dbReference type="OrthoDB" id="9776847at2"/>
<dbReference type="UniPathway" id="UPA00333">
    <property type="reaction ID" value="UER00453"/>
</dbReference>
<dbReference type="Proteomes" id="UP000001994">
    <property type="component" value="Chromosome"/>
</dbReference>
<dbReference type="GO" id="GO:0020037">
    <property type="term" value="F:heme binding"/>
    <property type="evidence" value="ECO:0000250"/>
    <property type="project" value="UniProtKB"/>
</dbReference>
<dbReference type="GO" id="GO:0046872">
    <property type="term" value="F:metal ion binding"/>
    <property type="evidence" value="ECO:0007669"/>
    <property type="project" value="UniProtKB-KW"/>
</dbReference>
<dbReference type="GO" id="GO:0004833">
    <property type="term" value="F:tryptophan 2,3-dioxygenase activity"/>
    <property type="evidence" value="ECO:0000250"/>
    <property type="project" value="UniProtKB"/>
</dbReference>
<dbReference type="GO" id="GO:0019442">
    <property type="term" value="P:L-tryptophan catabolic process to acetyl-CoA"/>
    <property type="evidence" value="ECO:0007669"/>
    <property type="project" value="TreeGrafter"/>
</dbReference>
<dbReference type="GO" id="GO:0019441">
    <property type="term" value="P:L-tryptophan catabolic process to kynurenine"/>
    <property type="evidence" value="ECO:0000250"/>
    <property type="project" value="UniProtKB"/>
</dbReference>
<dbReference type="FunFam" id="1.20.58.480:FF:000001">
    <property type="entry name" value="Tryptophan 2,3-dioxygenase"/>
    <property type="match status" value="1"/>
</dbReference>
<dbReference type="Gene3D" id="1.20.58.480">
    <property type="match status" value="1"/>
</dbReference>
<dbReference type="HAMAP" id="MF_01972">
    <property type="entry name" value="T23O"/>
    <property type="match status" value="1"/>
</dbReference>
<dbReference type="InterPro" id="IPR037217">
    <property type="entry name" value="Trp/Indoleamine_2_3_dOase-like"/>
</dbReference>
<dbReference type="InterPro" id="IPR017485">
    <property type="entry name" value="Trp_2-3-dOase_bac"/>
</dbReference>
<dbReference type="InterPro" id="IPR004981">
    <property type="entry name" value="Trp_2_3_dOase"/>
</dbReference>
<dbReference type="NCBIfam" id="TIGR03036">
    <property type="entry name" value="trp_2_3_diox"/>
    <property type="match status" value="1"/>
</dbReference>
<dbReference type="PANTHER" id="PTHR10138">
    <property type="entry name" value="TRYPTOPHAN 2,3-DIOXYGENASE"/>
    <property type="match status" value="1"/>
</dbReference>
<dbReference type="PANTHER" id="PTHR10138:SF0">
    <property type="entry name" value="TRYPTOPHAN 2,3-DIOXYGENASE"/>
    <property type="match status" value="1"/>
</dbReference>
<dbReference type="Pfam" id="PF03301">
    <property type="entry name" value="Trp_dioxygenase"/>
    <property type="match status" value="2"/>
</dbReference>
<dbReference type="SUPFAM" id="SSF140959">
    <property type="entry name" value="Indolic compounds 2,3-dioxygenase-like"/>
    <property type="match status" value="1"/>
</dbReference>
<accession>A4YND6</accession>
<protein>
    <recommendedName>
        <fullName evidence="1">Tryptophan 2,3-dioxygenase</fullName>
        <shortName evidence="1">TDO</shortName>
        <ecNumber evidence="1">1.13.11.11</ecNumber>
    </recommendedName>
    <alternativeName>
        <fullName evidence="1">Tryptamin 2,3-dioxygenase</fullName>
    </alternativeName>
    <alternativeName>
        <fullName evidence="1">Tryptophan oxygenase</fullName>
        <shortName evidence="1">TO</shortName>
        <shortName evidence="1">TRPO</shortName>
    </alternativeName>
    <alternativeName>
        <fullName evidence="1">Tryptophan pyrrolase</fullName>
    </alternativeName>
    <alternativeName>
        <fullName evidence="1">Tryptophanase</fullName>
    </alternativeName>
</protein>
<reference key="1">
    <citation type="journal article" date="2007" name="Science">
        <title>Legumes symbioses: absence of nod genes in photosynthetic bradyrhizobia.</title>
        <authorList>
            <person name="Giraud E."/>
            <person name="Moulin L."/>
            <person name="Vallenet D."/>
            <person name="Barbe V."/>
            <person name="Cytryn E."/>
            <person name="Avarre J.-C."/>
            <person name="Jaubert M."/>
            <person name="Simon D."/>
            <person name="Cartieaux F."/>
            <person name="Prin Y."/>
            <person name="Bena G."/>
            <person name="Hannibal L."/>
            <person name="Fardoux J."/>
            <person name="Kojadinovic M."/>
            <person name="Vuillet L."/>
            <person name="Lajus A."/>
            <person name="Cruveiller S."/>
            <person name="Rouy Z."/>
            <person name="Mangenot S."/>
            <person name="Segurens B."/>
            <person name="Dossat C."/>
            <person name="Franck W.L."/>
            <person name="Chang W.-S."/>
            <person name="Saunders E."/>
            <person name="Bruce D."/>
            <person name="Richardson P."/>
            <person name="Normand P."/>
            <person name="Dreyfus B."/>
            <person name="Pignol D."/>
            <person name="Stacey G."/>
            <person name="Emerich D."/>
            <person name="Vermeglio A."/>
            <person name="Medigue C."/>
            <person name="Sadowsky M."/>
        </authorList>
    </citation>
    <scope>NUCLEOTIDE SEQUENCE [LARGE SCALE GENOMIC DNA]</scope>
    <source>
        <strain>ORS 278</strain>
    </source>
</reference>
<keyword id="KW-0223">Dioxygenase</keyword>
<keyword id="KW-0349">Heme</keyword>
<keyword id="KW-0408">Iron</keyword>
<keyword id="KW-0479">Metal-binding</keyword>
<keyword id="KW-0560">Oxidoreductase</keyword>
<keyword id="KW-1185">Reference proteome</keyword>
<keyword id="KW-0823">Tryptophan catabolism</keyword>
<feature type="chain" id="PRO_0000360095" description="Tryptophan 2,3-dioxygenase">
    <location>
        <begin position="1"/>
        <end position="279"/>
    </location>
</feature>
<feature type="binding site" evidence="1">
    <location>
        <begin position="48"/>
        <end position="52"/>
    </location>
    <ligand>
        <name>substrate</name>
    </ligand>
</feature>
<feature type="binding site" evidence="1">
    <location>
        <position position="110"/>
    </location>
    <ligand>
        <name>substrate</name>
    </ligand>
</feature>
<feature type="binding site" evidence="1">
    <location>
        <position position="114"/>
    </location>
    <ligand>
        <name>substrate</name>
    </ligand>
</feature>
<feature type="binding site" description="axial binding residue" evidence="1">
    <location>
        <position position="237"/>
    </location>
    <ligand>
        <name>heme</name>
        <dbReference type="ChEBI" id="CHEBI:30413"/>
    </ligand>
    <ligandPart>
        <name>Fe</name>
        <dbReference type="ChEBI" id="CHEBI:18248"/>
    </ligandPart>
</feature>
<feature type="binding site" evidence="1">
    <location>
        <position position="251"/>
    </location>
    <ligand>
        <name>substrate</name>
    </ligand>
</feature>
<organism>
    <name type="scientific">Bradyrhizobium sp. (strain ORS 278)</name>
    <dbReference type="NCBI Taxonomy" id="114615"/>
    <lineage>
        <taxon>Bacteria</taxon>
        <taxon>Pseudomonadati</taxon>
        <taxon>Pseudomonadota</taxon>
        <taxon>Alphaproteobacteria</taxon>
        <taxon>Hyphomicrobiales</taxon>
        <taxon>Nitrobacteraceae</taxon>
        <taxon>Bradyrhizobium</taxon>
    </lineage>
</organism>
<evidence type="ECO:0000255" key="1">
    <source>
        <dbReference type="HAMAP-Rule" id="MF_01972"/>
    </source>
</evidence>